<name>RNH2_CAMJJ</name>
<comment type="function">
    <text evidence="1">Endonuclease that specifically degrades the RNA of RNA-DNA hybrids.</text>
</comment>
<comment type="catalytic activity">
    <reaction evidence="1">
        <text>Endonucleolytic cleavage to 5'-phosphomonoester.</text>
        <dbReference type="EC" id="3.1.26.4"/>
    </reaction>
</comment>
<comment type="cofactor">
    <cofactor evidence="1">
        <name>Mn(2+)</name>
        <dbReference type="ChEBI" id="CHEBI:29035"/>
    </cofactor>
    <cofactor evidence="1">
        <name>Mg(2+)</name>
        <dbReference type="ChEBI" id="CHEBI:18420"/>
    </cofactor>
    <text evidence="1">Manganese or magnesium. Binds 1 divalent metal ion per monomer in the absence of substrate. May bind a second metal ion after substrate binding.</text>
</comment>
<comment type="subcellular location">
    <subcellularLocation>
        <location evidence="1">Cytoplasm</location>
    </subcellularLocation>
</comment>
<comment type="similarity">
    <text evidence="1">Belongs to the RNase HII family.</text>
</comment>
<dbReference type="EC" id="3.1.26.4" evidence="1"/>
<dbReference type="EMBL" id="CP000538">
    <property type="protein sequence ID" value="EAQ71905.1"/>
    <property type="molecule type" value="Genomic_DNA"/>
</dbReference>
<dbReference type="RefSeq" id="WP_002853153.1">
    <property type="nucleotide sequence ID" value="NC_008787.1"/>
</dbReference>
<dbReference type="SMR" id="A1VX88"/>
<dbReference type="KEGG" id="cjj:CJJ81176_0036"/>
<dbReference type="eggNOG" id="COG0164">
    <property type="taxonomic scope" value="Bacteria"/>
</dbReference>
<dbReference type="HOGENOM" id="CLU_036532_3_1_7"/>
<dbReference type="Proteomes" id="UP000000646">
    <property type="component" value="Chromosome"/>
</dbReference>
<dbReference type="GO" id="GO:0005737">
    <property type="term" value="C:cytoplasm"/>
    <property type="evidence" value="ECO:0007669"/>
    <property type="project" value="UniProtKB-SubCell"/>
</dbReference>
<dbReference type="GO" id="GO:0032299">
    <property type="term" value="C:ribonuclease H2 complex"/>
    <property type="evidence" value="ECO:0007669"/>
    <property type="project" value="TreeGrafter"/>
</dbReference>
<dbReference type="GO" id="GO:0030145">
    <property type="term" value="F:manganese ion binding"/>
    <property type="evidence" value="ECO:0007669"/>
    <property type="project" value="UniProtKB-UniRule"/>
</dbReference>
<dbReference type="GO" id="GO:0003723">
    <property type="term" value="F:RNA binding"/>
    <property type="evidence" value="ECO:0007669"/>
    <property type="project" value="InterPro"/>
</dbReference>
<dbReference type="GO" id="GO:0004523">
    <property type="term" value="F:RNA-DNA hybrid ribonuclease activity"/>
    <property type="evidence" value="ECO:0007669"/>
    <property type="project" value="UniProtKB-UniRule"/>
</dbReference>
<dbReference type="GO" id="GO:0043137">
    <property type="term" value="P:DNA replication, removal of RNA primer"/>
    <property type="evidence" value="ECO:0007669"/>
    <property type="project" value="TreeGrafter"/>
</dbReference>
<dbReference type="GO" id="GO:0006298">
    <property type="term" value="P:mismatch repair"/>
    <property type="evidence" value="ECO:0007669"/>
    <property type="project" value="TreeGrafter"/>
</dbReference>
<dbReference type="CDD" id="cd07182">
    <property type="entry name" value="RNase_HII_bacteria_HII_like"/>
    <property type="match status" value="1"/>
</dbReference>
<dbReference type="Gene3D" id="3.30.420.10">
    <property type="entry name" value="Ribonuclease H-like superfamily/Ribonuclease H"/>
    <property type="match status" value="1"/>
</dbReference>
<dbReference type="HAMAP" id="MF_00052_B">
    <property type="entry name" value="RNase_HII_B"/>
    <property type="match status" value="1"/>
</dbReference>
<dbReference type="InterPro" id="IPR022898">
    <property type="entry name" value="RNase_HII"/>
</dbReference>
<dbReference type="InterPro" id="IPR001352">
    <property type="entry name" value="RNase_HII/HIII"/>
</dbReference>
<dbReference type="InterPro" id="IPR024567">
    <property type="entry name" value="RNase_HII/HIII_dom"/>
</dbReference>
<dbReference type="InterPro" id="IPR012337">
    <property type="entry name" value="RNaseH-like_sf"/>
</dbReference>
<dbReference type="InterPro" id="IPR036397">
    <property type="entry name" value="RNaseH_sf"/>
</dbReference>
<dbReference type="NCBIfam" id="NF000595">
    <property type="entry name" value="PRK00015.1-3"/>
    <property type="match status" value="1"/>
</dbReference>
<dbReference type="PANTHER" id="PTHR10954">
    <property type="entry name" value="RIBONUCLEASE H2 SUBUNIT A"/>
    <property type="match status" value="1"/>
</dbReference>
<dbReference type="PANTHER" id="PTHR10954:SF18">
    <property type="entry name" value="RIBONUCLEASE HII"/>
    <property type="match status" value="1"/>
</dbReference>
<dbReference type="Pfam" id="PF01351">
    <property type="entry name" value="RNase_HII"/>
    <property type="match status" value="1"/>
</dbReference>
<dbReference type="SUPFAM" id="SSF53098">
    <property type="entry name" value="Ribonuclease H-like"/>
    <property type="match status" value="1"/>
</dbReference>
<dbReference type="PROSITE" id="PS51975">
    <property type="entry name" value="RNASE_H_2"/>
    <property type="match status" value="1"/>
</dbReference>
<organism>
    <name type="scientific">Campylobacter jejuni subsp. jejuni serotype O:23/36 (strain 81-176)</name>
    <dbReference type="NCBI Taxonomy" id="354242"/>
    <lineage>
        <taxon>Bacteria</taxon>
        <taxon>Pseudomonadati</taxon>
        <taxon>Campylobacterota</taxon>
        <taxon>Epsilonproteobacteria</taxon>
        <taxon>Campylobacterales</taxon>
        <taxon>Campylobacteraceae</taxon>
        <taxon>Campylobacter</taxon>
    </lineage>
</organism>
<protein>
    <recommendedName>
        <fullName evidence="1">Ribonuclease HII</fullName>
        <shortName evidence="1">RNase HII</shortName>
        <ecNumber evidence="1">3.1.26.4</ecNumber>
    </recommendedName>
</protein>
<accession>A1VX88</accession>
<gene>
    <name evidence="1" type="primary">rnhB</name>
    <name type="ordered locus">CJJ81176_0036</name>
</gene>
<keyword id="KW-0963">Cytoplasm</keyword>
<keyword id="KW-0255">Endonuclease</keyword>
<keyword id="KW-0378">Hydrolase</keyword>
<keyword id="KW-0464">Manganese</keyword>
<keyword id="KW-0479">Metal-binding</keyword>
<keyword id="KW-0540">Nuclease</keyword>
<feature type="chain" id="PRO_1000031132" description="Ribonuclease HII">
    <location>
        <begin position="1"/>
        <end position="191"/>
    </location>
</feature>
<feature type="domain" description="RNase H type-2" evidence="2">
    <location>
        <begin position="16"/>
        <end position="191"/>
    </location>
</feature>
<feature type="binding site" evidence="1">
    <location>
        <position position="22"/>
    </location>
    <ligand>
        <name>a divalent metal cation</name>
        <dbReference type="ChEBI" id="CHEBI:60240"/>
    </ligand>
</feature>
<feature type="binding site" evidence="1">
    <location>
        <position position="23"/>
    </location>
    <ligand>
        <name>a divalent metal cation</name>
        <dbReference type="ChEBI" id="CHEBI:60240"/>
    </ligand>
</feature>
<feature type="binding site" evidence="1">
    <location>
        <position position="110"/>
    </location>
    <ligand>
        <name>a divalent metal cation</name>
        <dbReference type="ChEBI" id="CHEBI:60240"/>
    </ligand>
</feature>
<evidence type="ECO:0000255" key="1">
    <source>
        <dbReference type="HAMAP-Rule" id="MF_00052"/>
    </source>
</evidence>
<evidence type="ECO:0000255" key="2">
    <source>
        <dbReference type="PROSITE-ProRule" id="PRU01319"/>
    </source>
</evidence>
<sequence length="191" mass="21480">MKTLFDTKELLNEFDINLIGIDEAGRGALAGPMMMAACKLNKQLDGLCDSKKLSEKKREELYEIIIKNSNYLILAFSSEQIDALGLSTCLKKGLKLIKKHFKTENNFLYDGNTNLGINGIKTQIKADTSILQVSAASILAKVSKDRVMNFLAKDFPCYEFEKNKAYGTKAHKEFIAKFGICKLHRKSFKLL</sequence>
<proteinExistence type="inferred from homology"/>
<reference key="1">
    <citation type="submission" date="2006-12" db="EMBL/GenBank/DDBJ databases">
        <authorList>
            <person name="Fouts D.E."/>
            <person name="Nelson K.E."/>
            <person name="Sebastian Y."/>
        </authorList>
    </citation>
    <scope>NUCLEOTIDE SEQUENCE [LARGE SCALE GENOMIC DNA]</scope>
    <source>
        <strain>81-176</strain>
    </source>
</reference>